<feature type="chain" id="PRO_1000045368" description="Probable transcriptional regulatory protein A1G_04400">
    <location>
        <begin position="1"/>
        <end position="253"/>
    </location>
</feature>
<feature type="region of interest" description="Disordered" evidence="2">
    <location>
        <begin position="1"/>
        <end position="21"/>
    </location>
</feature>
<dbReference type="EMBL" id="CP000848">
    <property type="protein sequence ID" value="ABV76384.1"/>
    <property type="molecule type" value="Genomic_DNA"/>
</dbReference>
<dbReference type="RefSeq" id="WP_012150957.1">
    <property type="nucleotide sequence ID" value="NZ_CP121767.1"/>
</dbReference>
<dbReference type="SMR" id="A8GSK9"/>
<dbReference type="GeneID" id="79937498"/>
<dbReference type="KEGG" id="rri:A1G_04400"/>
<dbReference type="HOGENOM" id="CLU_062974_2_2_5"/>
<dbReference type="Proteomes" id="UP000006832">
    <property type="component" value="Chromosome"/>
</dbReference>
<dbReference type="GO" id="GO:0005737">
    <property type="term" value="C:cytoplasm"/>
    <property type="evidence" value="ECO:0007669"/>
    <property type="project" value="UniProtKB-SubCell"/>
</dbReference>
<dbReference type="GO" id="GO:0003677">
    <property type="term" value="F:DNA binding"/>
    <property type="evidence" value="ECO:0007669"/>
    <property type="project" value="UniProtKB-UniRule"/>
</dbReference>
<dbReference type="GO" id="GO:0006355">
    <property type="term" value="P:regulation of DNA-templated transcription"/>
    <property type="evidence" value="ECO:0007669"/>
    <property type="project" value="UniProtKB-UniRule"/>
</dbReference>
<dbReference type="FunFam" id="1.10.10.200:FF:000002">
    <property type="entry name" value="Probable transcriptional regulatory protein CLM62_37755"/>
    <property type="match status" value="1"/>
</dbReference>
<dbReference type="Gene3D" id="1.10.10.200">
    <property type="match status" value="1"/>
</dbReference>
<dbReference type="Gene3D" id="3.30.70.980">
    <property type="match status" value="2"/>
</dbReference>
<dbReference type="HAMAP" id="MF_00693">
    <property type="entry name" value="Transcrip_reg_TACO1"/>
    <property type="match status" value="1"/>
</dbReference>
<dbReference type="InterPro" id="IPR017856">
    <property type="entry name" value="Integrase-like_N"/>
</dbReference>
<dbReference type="InterPro" id="IPR048300">
    <property type="entry name" value="TACO1_YebC-like_2nd/3rd_dom"/>
</dbReference>
<dbReference type="InterPro" id="IPR049083">
    <property type="entry name" value="TACO1_YebC_N"/>
</dbReference>
<dbReference type="InterPro" id="IPR002876">
    <property type="entry name" value="Transcrip_reg_TACO1-like"/>
</dbReference>
<dbReference type="InterPro" id="IPR026564">
    <property type="entry name" value="Transcrip_reg_TACO1-like_dom3"/>
</dbReference>
<dbReference type="InterPro" id="IPR029072">
    <property type="entry name" value="YebC-like"/>
</dbReference>
<dbReference type="NCBIfam" id="NF001030">
    <property type="entry name" value="PRK00110.1"/>
    <property type="match status" value="1"/>
</dbReference>
<dbReference type="NCBIfam" id="NF009044">
    <property type="entry name" value="PRK12378.1"/>
    <property type="match status" value="1"/>
</dbReference>
<dbReference type="NCBIfam" id="TIGR01033">
    <property type="entry name" value="YebC/PmpR family DNA-binding transcriptional regulator"/>
    <property type="match status" value="1"/>
</dbReference>
<dbReference type="PANTHER" id="PTHR12532:SF11">
    <property type="match status" value="1"/>
</dbReference>
<dbReference type="PANTHER" id="PTHR12532">
    <property type="entry name" value="TRANSLATIONAL ACTIVATOR OF CYTOCHROME C OXIDASE 1"/>
    <property type="match status" value="1"/>
</dbReference>
<dbReference type="Pfam" id="PF20772">
    <property type="entry name" value="TACO1_YebC_N"/>
    <property type="match status" value="1"/>
</dbReference>
<dbReference type="Pfam" id="PF01709">
    <property type="entry name" value="Transcrip_reg"/>
    <property type="match status" value="1"/>
</dbReference>
<dbReference type="SUPFAM" id="SSF75625">
    <property type="entry name" value="YebC-like"/>
    <property type="match status" value="1"/>
</dbReference>
<keyword id="KW-0963">Cytoplasm</keyword>
<keyword id="KW-0238">DNA-binding</keyword>
<keyword id="KW-0804">Transcription</keyword>
<keyword id="KW-0805">Transcription regulation</keyword>
<organism>
    <name type="scientific">Rickettsia rickettsii (strain Sheila Smith)</name>
    <dbReference type="NCBI Taxonomy" id="392021"/>
    <lineage>
        <taxon>Bacteria</taxon>
        <taxon>Pseudomonadati</taxon>
        <taxon>Pseudomonadota</taxon>
        <taxon>Alphaproteobacteria</taxon>
        <taxon>Rickettsiales</taxon>
        <taxon>Rickettsiaceae</taxon>
        <taxon>Rickettsieae</taxon>
        <taxon>Rickettsia</taxon>
        <taxon>spotted fever group</taxon>
    </lineage>
</organism>
<comment type="subcellular location">
    <subcellularLocation>
        <location evidence="1">Cytoplasm</location>
    </subcellularLocation>
</comment>
<comment type="similarity">
    <text evidence="1">Belongs to the TACO1 family.</text>
</comment>
<sequence>MAGHSKFKNIQHRKGAQDKKRAKVFTKLIREIVTAAKTGSSNNPENNPRLRNALTAARSQNLPKERIDKALNSANESSNNENYTEIRYEGYAPNGIAIIVEALTDNKNRTAAEVRSSFTKYGGSLGETGSVNYLFNHCGVIQYPINIASNEDVLEAVIEAGGHDIISDDTTHTIYTDVENFSKVLDFFTGKYGIPEDSYIGWIPLNTIIIDDKEKAAKLLKLVEVLEESDDVQRVFGNYELSDDVYEIIQGEP</sequence>
<reference key="1">
    <citation type="submission" date="2007-09" db="EMBL/GenBank/DDBJ databases">
        <title>Complete genome sequence of Rickettsia rickettsii.</title>
        <authorList>
            <person name="Madan A."/>
            <person name="Fahey J."/>
            <person name="Helton E."/>
            <person name="Ketteman M."/>
            <person name="Madan A."/>
            <person name="Rodrigues S."/>
            <person name="Sanchez A."/>
            <person name="Dasch G."/>
            <person name="Eremeeva M."/>
        </authorList>
    </citation>
    <scope>NUCLEOTIDE SEQUENCE [LARGE SCALE GENOMIC DNA]</scope>
    <source>
        <strain>Sheila Smith</strain>
    </source>
</reference>
<accession>A8GSK9</accession>
<protein>
    <recommendedName>
        <fullName evidence="1">Probable transcriptional regulatory protein A1G_04400</fullName>
    </recommendedName>
</protein>
<proteinExistence type="inferred from homology"/>
<evidence type="ECO:0000255" key="1">
    <source>
        <dbReference type="HAMAP-Rule" id="MF_00693"/>
    </source>
</evidence>
<evidence type="ECO:0000256" key="2">
    <source>
        <dbReference type="SAM" id="MobiDB-lite"/>
    </source>
</evidence>
<name>Y4400_RICRS</name>
<gene>
    <name type="ordered locus">A1G_04400</name>
</gene>